<comment type="function">
    <text evidence="1">Methylates ribosomal protein L11.</text>
</comment>
<comment type="catalytic activity">
    <reaction evidence="1">
        <text>L-lysyl-[protein] + 3 S-adenosyl-L-methionine = N(6),N(6),N(6)-trimethyl-L-lysyl-[protein] + 3 S-adenosyl-L-homocysteine + 3 H(+)</text>
        <dbReference type="Rhea" id="RHEA:54192"/>
        <dbReference type="Rhea" id="RHEA-COMP:9752"/>
        <dbReference type="Rhea" id="RHEA-COMP:13826"/>
        <dbReference type="ChEBI" id="CHEBI:15378"/>
        <dbReference type="ChEBI" id="CHEBI:29969"/>
        <dbReference type="ChEBI" id="CHEBI:57856"/>
        <dbReference type="ChEBI" id="CHEBI:59789"/>
        <dbReference type="ChEBI" id="CHEBI:61961"/>
    </reaction>
</comment>
<comment type="subcellular location">
    <subcellularLocation>
        <location evidence="1">Cytoplasm</location>
    </subcellularLocation>
</comment>
<comment type="similarity">
    <text evidence="1">Belongs to the methyltransferase superfamily. PrmA family.</text>
</comment>
<gene>
    <name evidence="1" type="primary">prmA</name>
    <name type="ordered locus">SbBS512_E3642</name>
</gene>
<reference key="1">
    <citation type="submission" date="2008-05" db="EMBL/GenBank/DDBJ databases">
        <title>Complete sequence of Shigella boydii serotype 18 strain BS512.</title>
        <authorList>
            <person name="Rasko D.A."/>
            <person name="Rosovitz M."/>
            <person name="Maurelli A.T."/>
            <person name="Myers G."/>
            <person name="Seshadri R."/>
            <person name="Cer R."/>
            <person name="Jiang L."/>
            <person name="Ravel J."/>
            <person name="Sebastian Y."/>
        </authorList>
    </citation>
    <scope>NUCLEOTIDE SEQUENCE [LARGE SCALE GENOMIC DNA]</scope>
    <source>
        <strain>CDC 3083-94 / BS512</strain>
    </source>
</reference>
<organism>
    <name type="scientific">Shigella boydii serotype 18 (strain CDC 3083-94 / BS512)</name>
    <dbReference type="NCBI Taxonomy" id="344609"/>
    <lineage>
        <taxon>Bacteria</taxon>
        <taxon>Pseudomonadati</taxon>
        <taxon>Pseudomonadota</taxon>
        <taxon>Gammaproteobacteria</taxon>
        <taxon>Enterobacterales</taxon>
        <taxon>Enterobacteriaceae</taxon>
        <taxon>Shigella</taxon>
    </lineage>
</organism>
<name>PRMA_SHIB3</name>
<dbReference type="EC" id="2.1.1.-" evidence="1"/>
<dbReference type="EMBL" id="CP001063">
    <property type="protein sequence ID" value="ACD06762.1"/>
    <property type="molecule type" value="Genomic_DNA"/>
</dbReference>
<dbReference type="RefSeq" id="WP_001145827.1">
    <property type="nucleotide sequence ID" value="NC_010658.1"/>
</dbReference>
<dbReference type="SMR" id="B2U2N5"/>
<dbReference type="STRING" id="344609.SbBS512_E3642"/>
<dbReference type="GeneID" id="75206107"/>
<dbReference type="KEGG" id="sbc:SbBS512_E3642"/>
<dbReference type="HOGENOM" id="CLU_049382_4_1_6"/>
<dbReference type="Proteomes" id="UP000001030">
    <property type="component" value="Chromosome"/>
</dbReference>
<dbReference type="GO" id="GO:0005829">
    <property type="term" value="C:cytosol"/>
    <property type="evidence" value="ECO:0007669"/>
    <property type="project" value="TreeGrafter"/>
</dbReference>
<dbReference type="GO" id="GO:0016279">
    <property type="term" value="F:protein-lysine N-methyltransferase activity"/>
    <property type="evidence" value="ECO:0007669"/>
    <property type="project" value="TreeGrafter"/>
</dbReference>
<dbReference type="GO" id="GO:0032259">
    <property type="term" value="P:methylation"/>
    <property type="evidence" value="ECO:0007669"/>
    <property type="project" value="UniProtKB-KW"/>
</dbReference>
<dbReference type="CDD" id="cd02440">
    <property type="entry name" value="AdoMet_MTases"/>
    <property type="match status" value="1"/>
</dbReference>
<dbReference type="FunFam" id="3.40.50.150:FF:000021">
    <property type="entry name" value="Ribosomal protein L11 methyltransferase"/>
    <property type="match status" value="1"/>
</dbReference>
<dbReference type="Gene3D" id="3.40.50.150">
    <property type="entry name" value="Vaccinia Virus protein VP39"/>
    <property type="match status" value="1"/>
</dbReference>
<dbReference type="HAMAP" id="MF_00735">
    <property type="entry name" value="Methyltr_PrmA"/>
    <property type="match status" value="1"/>
</dbReference>
<dbReference type="InterPro" id="IPR050078">
    <property type="entry name" value="Ribosomal_L11_MeTrfase_PrmA"/>
</dbReference>
<dbReference type="InterPro" id="IPR004498">
    <property type="entry name" value="Ribosomal_PrmA_MeTrfase"/>
</dbReference>
<dbReference type="InterPro" id="IPR029063">
    <property type="entry name" value="SAM-dependent_MTases_sf"/>
</dbReference>
<dbReference type="NCBIfam" id="TIGR00406">
    <property type="entry name" value="prmA"/>
    <property type="match status" value="1"/>
</dbReference>
<dbReference type="PANTHER" id="PTHR43648">
    <property type="entry name" value="ELECTRON TRANSFER FLAVOPROTEIN BETA SUBUNIT LYSINE METHYLTRANSFERASE"/>
    <property type="match status" value="1"/>
</dbReference>
<dbReference type="PANTHER" id="PTHR43648:SF1">
    <property type="entry name" value="ELECTRON TRANSFER FLAVOPROTEIN BETA SUBUNIT LYSINE METHYLTRANSFERASE"/>
    <property type="match status" value="1"/>
</dbReference>
<dbReference type="Pfam" id="PF06325">
    <property type="entry name" value="PrmA"/>
    <property type="match status" value="1"/>
</dbReference>
<dbReference type="PIRSF" id="PIRSF000401">
    <property type="entry name" value="RPL11_MTase"/>
    <property type="match status" value="1"/>
</dbReference>
<dbReference type="SUPFAM" id="SSF53335">
    <property type="entry name" value="S-adenosyl-L-methionine-dependent methyltransferases"/>
    <property type="match status" value="1"/>
</dbReference>
<protein>
    <recommendedName>
        <fullName evidence="1">Ribosomal protein L11 methyltransferase</fullName>
        <shortName evidence="1">L11 Mtase</shortName>
        <ecNumber evidence="1">2.1.1.-</ecNumber>
    </recommendedName>
</protein>
<keyword id="KW-0963">Cytoplasm</keyword>
<keyword id="KW-0489">Methyltransferase</keyword>
<keyword id="KW-1185">Reference proteome</keyword>
<keyword id="KW-0949">S-adenosyl-L-methionine</keyword>
<keyword id="KW-0808">Transferase</keyword>
<sequence>MPWIQLKLNTTGANAEDLSDALMEAGAVSITFQDTHDTPVFEPLPGETRLWGDTDVIGLFDAETDMNDVVAILENHPLLGAGFAHKIEQLEDKDWEREWMDNFHPMRFGERLWICPSWRDVPDENAVNVMLDPGLAFGTGTHPTTSLCLQWLDSLDLTGKTVIDFGCGSGILAIAALKLGAAKAIGIDIDPQAIQASRDNAERNGVSDRLELYLPKDQPEEMKADVVVANILAGPLRELAPLISVLPVSGGLLGLSGILASQAESVCEAYADSFALDPVVEKEEWCRITGRKN</sequence>
<proteinExistence type="inferred from homology"/>
<accession>B2U2N5</accession>
<evidence type="ECO:0000255" key="1">
    <source>
        <dbReference type="HAMAP-Rule" id="MF_00735"/>
    </source>
</evidence>
<feature type="chain" id="PRO_1000132828" description="Ribosomal protein L11 methyltransferase">
    <location>
        <begin position="1"/>
        <end position="293"/>
    </location>
</feature>
<feature type="binding site" evidence="1">
    <location>
        <position position="145"/>
    </location>
    <ligand>
        <name>S-adenosyl-L-methionine</name>
        <dbReference type="ChEBI" id="CHEBI:59789"/>
    </ligand>
</feature>
<feature type="binding site" evidence="1">
    <location>
        <position position="166"/>
    </location>
    <ligand>
        <name>S-adenosyl-L-methionine</name>
        <dbReference type="ChEBI" id="CHEBI:59789"/>
    </ligand>
</feature>
<feature type="binding site" evidence="1">
    <location>
        <position position="188"/>
    </location>
    <ligand>
        <name>S-adenosyl-L-methionine</name>
        <dbReference type="ChEBI" id="CHEBI:59789"/>
    </ligand>
</feature>
<feature type="binding site" evidence="1">
    <location>
        <position position="230"/>
    </location>
    <ligand>
        <name>S-adenosyl-L-methionine</name>
        <dbReference type="ChEBI" id="CHEBI:59789"/>
    </ligand>
</feature>